<keyword id="KW-0012">Acyltransferase</keyword>
<keyword id="KW-0028">Amino-acid biosynthesis</keyword>
<keyword id="KW-0055">Arginine biosynthesis</keyword>
<keyword id="KW-0963">Cytoplasm</keyword>
<keyword id="KW-1185">Reference proteome</keyword>
<keyword id="KW-0808">Transferase</keyword>
<dbReference type="EC" id="2.3.1.1"/>
<dbReference type="EMBL" id="AE005674">
    <property type="protein sequence ID" value="AAN44316.2"/>
    <property type="molecule type" value="Genomic_DNA"/>
</dbReference>
<dbReference type="EMBL" id="AE014073">
    <property type="protein sequence ID" value="AAP18141.1"/>
    <property type="molecule type" value="Genomic_DNA"/>
</dbReference>
<dbReference type="RefSeq" id="NP_708609.2">
    <property type="nucleotide sequence ID" value="NC_004337.2"/>
</dbReference>
<dbReference type="RefSeq" id="WP_000237959.1">
    <property type="nucleotide sequence ID" value="NZ_WPGW01000008.1"/>
</dbReference>
<dbReference type="SMR" id="P59293"/>
<dbReference type="STRING" id="198214.SF2829"/>
<dbReference type="PaxDb" id="198214-SF2829"/>
<dbReference type="GeneID" id="1025049"/>
<dbReference type="KEGG" id="sfl:SF2829"/>
<dbReference type="KEGG" id="sfx:S3026"/>
<dbReference type="PATRIC" id="fig|198214.7.peg.3367"/>
<dbReference type="HOGENOM" id="CLU_024773_0_0_6"/>
<dbReference type="UniPathway" id="UPA00068">
    <property type="reaction ID" value="UER00106"/>
</dbReference>
<dbReference type="Proteomes" id="UP000001006">
    <property type="component" value="Chromosome"/>
</dbReference>
<dbReference type="Proteomes" id="UP000002673">
    <property type="component" value="Chromosome"/>
</dbReference>
<dbReference type="GO" id="GO:0005737">
    <property type="term" value="C:cytoplasm"/>
    <property type="evidence" value="ECO:0007669"/>
    <property type="project" value="UniProtKB-SubCell"/>
</dbReference>
<dbReference type="GO" id="GO:0004042">
    <property type="term" value="F:L-glutamate N-acetyltransferase activity"/>
    <property type="evidence" value="ECO:0007669"/>
    <property type="project" value="UniProtKB-UniRule"/>
</dbReference>
<dbReference type="GO" id="GO:0006526">
    <property type="term" value="P:L-arginine biosynthetic process"/>
    <property type="evidence" value="ECO:0007669"/>
    <property type="project" value="UniProtKB-UniRule"/>
</dbReference>
<dbReference type="CDD" id="cd04237">
    <property type="entry name" value="AAK_NAGS-ABP"/>
    <property type="match status" value="1"/>
</dbReference>
<dbReference type="CDD" id="cd04301">
    <property type="entry name" value="NAT_SF"/>
    <property type="match status" value="1"/>
</dbReference>
<dbReference type="FunFam" id="3.40.1160.10:FF:000005">
    <property type="entry name" value="Amino-acid acetyltransferase"/>
    <property type="match status" value="1"/>
</dbReference>
<dbReference type="FunFam" id="3.40.630.30:FF:000009">
    <property type="entry name" value="Amino-acid acetyltransferase"/>
    <property type="match status" value="1"/>
</dbReference>
<dbReference type="Gene3D" id="3.40.630.30">
    <property type="match status" value="1"/>
</dbReference>
<dbReference type="Gene3D" id="3.40.1160.10">
    <property type="entry name" value="Acetylglutamate kinase-like"/>
    <property type="match status" value="1"/>
</dbReference>
<dbReference type="HAMAP" id="MF_01105">
    <property type="entry name" value="N_acetyl_glu_synth"/>
    <property type="match status" value="1"/>
</dbReference>
<dbReference type="InterPro" id="IPR036393">
    <property type="entry name" value="AceGlu_kinase-like_sf"/>
</dbReference>
<dbReference type="InterPro" id="IPR016181">
    <property type="entry name" value="Acyl_CoA_acyltransferase"/>
</dbReference>
<dbReference type="InterPro" id="IPR001048">
    <property type="entry name" value="Asp/Glu/Uridylate_kinase"/>
</dbReference>
<dbReference type="InterPro" id="IPR000182">
    <property type="entry name" value="GNAT_dom"/>
</dbReference>
<dbReference type="InterPro" id="IPR033719">
    <property type="entry name" value="NAGS_kin"/>
</dbReference>
<dbReference type="InterPro" id="IPR010167">
    <property type="entry name" value="NH2A_AcTrfase"/>
</dbReference>
<dbReference type="NCBIfam" id="TIGR01890">
    <property type="entry name" value="N-Ac-Glu-synth"/>
    <property type="match status" value="1"/>
</dbReference>
<dbReference type="NCBIfam" id="NF003641">
    <property type="entry name" value="PRK05279.1"/>
    <property type="match status" value="1"/>
</dbReference>
<dbReference type="PANTHER" id="PTHR30602">
    <property type="entry name" value="AMINO-ACID ACETYLTRANSFERASE"/>
    <property type="match status" value="1"/>
</dbReference>
<dbReference type="PANTHER" id="PTHR30602:SF12">
    <property type="entry name" value="AMINO-ACID ACETYLTRANSFERASE NAGS1, CHLOROPLASTIC-RELATED"/>
    <property type="match status" value="1"/>
</dbReference>
<dbReference type="Pfam" id="PF00696">
    <property type="entry name" value="AA_kinase"/>
    <property type="match status" value="1"/>
</dbReference>
<dbReference type="Pfam" id="PF00583">
    <property type="entry name" value="Acetyltransf_1"/>
    <property type="match status" value="1"/>
</dbReference>
<dbReference type="PIRSF" id="PIRSF000423">
    <property type="entry name" value="ArgA"/>
    <property type="match status" value="1"/>
</dbReference>
<dbReference type="SUPFAM" id="SSF55729">
    <property type="entry name" value="Acyl-CoA N-acyltransferases (Nat)"/>
    <property type="match status" value="1"/>
</dbReference>
<dbReference type="SUPFAM" id="SSF53633">
    <property type="entry name" value="Carbamate kinase-like"/>
    <property type="match status" value="1"/>
</dbReference>
<dbReference type="PROSITE" id="PS51186">
    <property type="entry name" value="GNAT"/>
    <property type="match status" value="1"/>
</dbReference>
<comment type="catalytic activity">
    <reaction>
        <text>L-glutamate + acetyl-CoA = N-acetyl-L-glutamate + CoA + H(+)</text>
        <dbReference type="Rhea" id="RHEA:24292"/>
        <dbReference type="ChEBI" id="CHEBI:15378"/>
        <dbReference type="ChEBI" id="CHEBI:29985"/>
        <dbReference type="ChEBI" id="CHEBI:44337"/>
        <dbReference type="ChEBI" id="CHEBI:57287"/>
        <dbReference type="ChEBI" id="CHEBI:57288"/>
        <dbReference type="EC" id="2.3.1.1"/>
    </reaction>
</comment>
<comment type="activity regulation">
    <text evidence="1">Feedback inhibition by L-arginine.</text>
</comment>
<comment type="pathway">
    <text>Amino-acid biosynthesis; L-arginine biosynthesis; N(2)-acetyl-L-ornithine from L-glutamate: step 1/4.</text>
</comment>
<comment type="subunit">
    <text evidence="1">Homohexamer.</text>
</comment>
<comment type="subcellular location">
    <subcellularLocation>
        <location evidence="1">Cytoplasm</location>
    </subcellularLocation>
</comment>
<comment type="similarity">
    <text evidence="2">Belongs to the acetyltransferase family. ArgA subfamily.</text>
</comment>
<gene>
    <name type="primary">argA</name>
    <name type="ordered locus">SF2829</name>
    <name type="ordered locus">S3026</name>
</gene>
<sequence length="443" mass="49209">MVKERKTELVEGFRHSVPYINTHRGKTFVIMLGGEAIEHENFSSIVNDIGLLHSLGIRLVVVYGARPQIDANLAAHHHEPLYHKNIRVTDAKTLELVKQAAGTLQLDITARLSMSLNNTPLQGAHINVVSGNFIIAQPLGVDDGVDYCHSGRIRRIDEDALHRQLESGAIVLMGPVAVSVTGESFNLTSEEIATQLAIKLKAEKMIGFCSSQGVTNDDGDIVSELFPNEAQARVEAQEEKGDYNSGTVRFLRGAVKACRSGVRRCHLISYQEDGALLQELFSRDGIGTQIVMESAEQIRRATINDIGGILELIRPLEQQGILVRRSREQLEMEIDKFTIIQRDNTTIACAALYPFPEEKIGEMACVAVHPDYRSSSRGEVLLERIAAQAKQSGLSKLFVLTTRSIHWFQERGFTPVDIDLLPESKKQLYNYQRKSKVLMADLG</sequence>
<name>ARGA_SHIFL</name>
<reference key="1">
    <citation type="journal article" date="2002" name="Nucleic Acids Res.">
        <title>Genome sequence of Shigella flexneri 2a: insights into pathogenicity through comparison with genomes of Escherichia coli K12 and O157.</title>
        <authorList>
            <person name="Jin Q."/>
            <person name="Yuan Z."/>
            <person name="Xu J."/>
            <person name="Wang Y."/>
            <person name="Shen Y."/>
            <person name="Lu W."/>
            <person name="Wang J."/>
            <person name="Liu H."/>
            <person name="Yang J."/>
            <person name="Yang F."/>
            <person name="Zhang X."/>
            <person name="Zhang J."/>
            <person name="Yang G."/>
            <person name="Wu H."/>
            <person name="Qu D."/>
            <person name="Dong J."/>
            <person name="Sun L."/>
            <person name="Xue Y."/>
            <person name="Zhao A."/>
            <person name="Gao Y."/>
            <person name="Zhu J."/>
            <person name="Kan B."/>
            <person name="Ding K."/>
            <person name="Chen S."/>
            <person name="Cheng H."/>
            <person name="Yao Z."/>
            <person name="He B."/>
            <person name="Chen R."/>
            <person name="Ma D."/>
            <person name="Qiang B."/>
            <person name="Wen Y."/>
            <person name="Hou Y."/>
            <person name="Yu J."/>
        </authorList>
    </citation>
    <scope>NUCLEOTIDE SEQUENCE [LARGE SCALE GENOMIC DNA]</scope>
    <source>
        <strain>301 / Serotype 2a</strain>
    </source>
</reference>
<reference key="2">
    <citation type="journal article" date="2003" name="Infect. Immun.">
        <title>Complete genome sequence and comparative genomics of Shigella flexneri serotype 2a strain 2457T.</title>
        <authorList>
            <person name="Wei J."/>
            <person name="Goldberg M.B."/>
            <person name="Burland V."/>
            <person name="Venkatesan M.M."/>
            <person name="Deng W."/>
            <person name="Fournier G."/>
            <person name="Mayhew G.F."/>
            <person name="Plunkett G. III"/>
            <person name="Rose D.J."/>
            <person name="Darling A."/>
            <person name="Mau B."/>
            <person name="Perna N.T."/>
            <person name="Payne S.M."/>
            <person name="Runyen-Janecky L.J."/>
            <person name="Zhou S."/>
            <person name="Schwartz D.C."/>
            <person name="Blattner F.R."/>
        </authorList>
    </citation>
    <scope>NUCLEOTIDE SEQUENCE [LARGE SCALE GENOMIC DNA]</scope>
    <source>
        <strain>ATCC 700930 / 2457T / Serotype 2a</strain>
    </source>
</reference>
<accession>P59293</accession>
<proteinExistence type="inferred from homology"/>
<organism>
    <name type="scientific">Shigella flexneri</name>
    <dbReference type="NCBI Taxonomy" id="623"/>
    <lineage>
        <taxon>Bacteria</taxon>
        <taxon>Pseudomonadati</taxon>
        <taxon>Pseudomonadota</taxon>
        <taxon>Gammaproteobacteria</taxon>
        <taxon>Enterobacterales</taxon>
        <taxon>Enterobacteriaceae</taxon>
        <taxon>Shigella</taxon>
    </lineage>
</organism>
<protein>
    <recommendedName>
        <fullName>Amino-acid acetyltransferase</fullName>
        <ecNumber>2.3.1.1</ecNumber>
    </recommendedName>
    <alternativeName>
        <fullName>N-acetylglutamate synthase</fullName>
        <shortName>AGS</shortName>
        <shortName>NAGS</shortName>
    </alternativeName>
</protein>
<evidence type="ECO:0000250" key="1"/>
<evidence type="ECO:0000305" key="2"/>
<feature type="chain" id="PRO_0000186807" description="Amino-acid acetyltransferase">
    <location>
        <begin position="1"/>
        <end position="443"/>
    </location>
</feature>
<feature type="domain" description="N-acetyltransferase">
    <location>
        <begin position="296"/>
        <end position="443"/>
    </location>
</feature>